<gene>
    <name evidence="1" type="primary">hemE</name>
    <name type="ordered locus">RPE_1312</name>
</gene>
<reference key="1">
    <citation type="submission" date="2006-09" db="EMBL/GenBank/DDBJ databases">
        <title>Complete sequence of Rhodopseudomonas palustris BisA53.</title>
        <authorList>
            <consortium name="US DOE Joint Genome Institute"/>
            <person name="Copeland A."/>
            <person name="Lucas S."/>
            <person name="Lapidus A."/>
            <person name="Barry K."/>
            <person name="Detter J.C."/>
            <person name="Glavina del Rio T."/>
            <person name="Hammon N."/>
            <person name="Israni S."/>
            <person name="Dalin E."/>
            <person name="Tice H."/>
            <person name="Pitluck S."/>
            <person name="Chain P."/>
            <person name="Malfatti S."/>
            <person name="Shin M."/>
            <person name="Vergez L."/>
            <person name="Schmutz J."/>
            <person name="Larimer F."/>
            <person name="Land M."/>
            <person name="Hauser L."/>
            <person name="Pelletier D.A."/>
            <person name="Kyrpides N."/>
            <person name="Kim E."/>
            <person name="Harwood C.S."/>
            <person name="Oda Y."/>
            <person name="Richardson P."/>
        </authorList>
    </citation>
    <scope>NUCLEOTIDE SEQUENCE [LARGE SCALE GENOMIC DNA]</scope>
    <source>
        <strain>BisA53</strain>
    </source>
</reference>
<organism>
    <name type="scientific">Rhodopseudomonas palustris (strain BisA53)</name>
    <dbReference type="NCBI Taxonomy" id="316055"/>
    <lineage>
        <taxon>Bacteria</taxon>
        <taxon>Pseudomonadati</taxon>
        <taxon>Pseudomonadota</taxon>
        <taxon>Alphaproteobacteria</taxon>
        <taxon>Hyphomicrobiales</taxon>
        <taxon>Nitrobacteraceae</taxon>
        <taxon>Rhodopseudomonas</taxon>
    </lineage>
</organism>
<sequence>MTQNLVTKPFLEVLSGNRQASPPMWMMRQAGRYLPEYREVRAKAGGFLDLCFNAEFAAEVTLQPIRRFGFDAAIIFSDILVVPYALGRSVRFEVGEGPRLDPLDSPDKVSTLTKAIDLSKLQAVFDALRITRRELPPETTLIGFCGSPFTVATYMVAGHGTPDQAPARNMAYQHPGAFAKIIDVLVESSIQYLLAQLEAGAEVLQIFDTWAGVLPPREFERWSIEPTRRIVEGVRKVKPGTKIIGFPRGAGAMLPAFVERTGVDGVSIDWTAEPSFVREKVQSKVVVQGNLDPLVLIAGGAALDEAVDDVLKNFSGGRHIFNLGHGIQPETPIAHVEQMLKRVRAFKG</sequence>
<accession>Q07S20</accession>
<proteinExistence type="inferred from homology"/>
<feature type="chain" id="PRO_0000325683" description="Uroporphyrinogen decarboxylase">
    <location>
        <begin position="1"/>
        <end position="348"/>
    </location>
</feature>
<feature type="binding site" evidence="1">
    <location>
        <begin position="28"/>
        <end position="32"/>
    </location>
    <ligand>
        <name>substrate</name>
    </ligand>
</feature>
<feature type="binding site" evidence="1">
    <location>
        <position position="78"/>
    </location>
    <ligand>
        <name>substrate</name>
    </ligand>
</feature>
<feature type="binding site" evidence="1">
    <location>
        <position position="154"/>
    </location>
    <ligand>
        <name>substrate</name>
    </ligand>
</feature>
<feature type="binding site" evidence="1">
    <location>
        <position position="209"/>
    </location>
    <ligand>
        <name>substrate</name>
    </ligand>
</feature>
<feature type="binding site" evidence="1">
    <location>
        <position position="325"/>
    </location>
    <ligand>
        <name>substrate</name>
    </ligand>
</feature>
<feature type="site" description="Transition state stabilizer" evidence="1">
    <location>
        <position position="78"/>
    </location>
</feature>
<keyword id="KW-0963">Cytoplasm</keyword>
<keyword id="KW-0210">Decarboxylase</keyword>
<keyword id="KW-0456">Lyase</keyword>
<keyword id="KW-0627">Porphyrin biosynthesis</keyword>
<name>DCUP_RHOP5</name>
<evidence type="ECO:0000255" key="1">
    <source>
        <dbReference type="HAMAP-Rule" id="MF_00218"/>
    </source>
</evidence>
<dbReference type="EC" id="4.1.1.37" evidence="1"/>
<dbReference type="EMBL" id="CP000463">
    <property type="protein sequence ID" value="ABJ05264.1"/>
    <property type="molecule type" value="Genomic_DNA"/>
</dbReference>
<dbReference type="SMR" id="Q07S20"/>
<dbReference type="STRING" id="316055.RPE_1312"/>
<dbReference type="KEGG" id="rpe:RPE_1312"/>
<dbReference type="eggNOG" id="COG0407">
    <property type="taxonomic scope" value="Bacteria"/>
</dbReference>
<dbReference type="HOGENOM" id="CLU_040933_0_0_5"/>
<dbReference type="OrthoDB" id="9806656at2"/>
<dbReference type="UniPathway" id="UPA00251">
    <property type="reaction ID" value="UER00321"/>
</dbReference>
<dbReference type="GO" id="GO:0005829">
    <property type="term" value="C:cytosol"/>
    <property type="evidence" value="ECO:0007669"/>
    <property type="project" value="TreeGrafter"/>
</dbReference>
<dbReference type="GO" id="GO:0004853">
    <property type="term" value="F:uroporphyrinogen decarboxylase activity"/>
    <property type="evidence" value="ECO:0007669"/>
    <property type="project" value="UniProtKB-UniRule"/>
</dbReference>
<dbReference type="GO" id="GO:0019353">
    <property type="term" value="P:protoporphyrinogen IX biosynthetic process from glutamate"/>
    <property type="evidence" value="ECO:0007669"/>
    <property type="project" value="TreeGrafter"/>
</dbReference>
<dbReference type="CDD" id="cd00717">
    <property type="entry name" value="URO-D"/>
    <property type="match status" value="1"/>
</dbReference>
<dbReference type="FunFam" id="3.20.20.210:FF:000007">
    <property type="entry name" value="Uroporphyrinogen decarboxylase"/>
    <property type="match status" value="1"/>
</dbReference>
<dbReference type="Gene3D" id="3.20.20.210">
    <property type="match status" value="1"/>
</dbReference>
<dbReference type="HAMAP" id="MF_00218">
    <property type="entry name" value="URO_D"/>
    <property type="match status" value="1"/>
</dbReference>
<dbReference type="InterPro" id="IPR038071">
    <property type="entry name" value="UROD/MetE-like_sf"/>
</dbReference>
<dbReference type="InterPro" id="IPR006361">
    <property type="entry name" value="Uroporphyrinogen_deCO2ase_HemE"/>
</dbReference>
<dbReference type="InterPro" id="IPR000257">
    <property type="entry name" value="Uroporphyrinogen_deCOase"/>
</dbReference>
<dbReference type="NCBIfam" id="TIGR01464">
    <property type="entry name" value="hemE"/>
    <property type="match status" value="1"/>
</dbReference>
<dbReference type="PANTHER" id="PTHR21091">
    <property type="entry name" value="METHYLTETRAHYDROFOLATE:HOMOCYSTEINE METHYLTRANSFERASE RELATED"/>
    <property type="match status" value="1"/>
</dbReference>
<dbReference type="PANTHER" id="PTHR21091:SF169">
    <property type="entry name" value="UROPORPHYRINOGEN DECARBOXYLASE"/>
    <property type="match status" value="1"/>
</dbReference>
<dbReference type="Pfam" id="PF01208">
    <property type="entry name" value="URO-D"/>
    <property type="match status" value="1"/>
</dbReference>
<dbReference type="SUPFAM" id="SSF51726">
    <property type="entry name" value="UROD/MetE-like"/>
    <property type="match status" value="1"/>
</dbReference>
<dbReference type="PROSITE" id="PS00906">
    <property type="entry name" value="UROD_1"/>
    <property type="match status" value="1"/>
</dbReference>
<dbReference type="PROSITE" id="PS00907">
    <property type="entry name" value="UROD_2"/>
    <property type="match status" value="1"/>
</dbReference>
<protein>
    <recommendedName>
        <fullName evidence="1">Uroporphyrinogen decarboxylase</fullName>
        <shortName evidence="1">UPD</shortName>
        <shortName evidence="1">URO-D</shortName>
        <ecNumber evidence="1">4.1.1.37</ecNumber>
    </recommendedName>
</protein>
<comment type="function">
    <text evidence="1">Catalyzes the decarboxylation of four acetate groups of uroporphyrinogen-III to yield coproporphyrinogen-III.</text>
</comment>
<comment type="catalytic activity">
    <reaction evidence="1">
        <text>uroporphyrinogen III + 4 H(+) = coproporphyrinogen III + 4 CO2</text>
        <dbReference type="Rhea" id="RHEA:19865"/>
        <dbReference type="ChEBI" id="CHEBI:15378"/>
        <dbReference type="ChEBI" id="CHEBI:16526"/>
        <dbReference type="ChEBI" id="CHEBI:57308"/>
        <dbReference type="ChEBI" id="CHEBI:57309"/>
        <dbReference type="EC" id="4.1.1.37"/>
    </reaction>
</comment>
<comment type="pathway">
    <text evidence="1">Porphyrin-containing compound metabolism; protoporphyrin-IX biosynthesis; coproporphyrinogen-III from 5-aminolevulinate: step 4/4.</text>
</comment>
<comment type="subunit">
    <text evidence="1">Homodimer.</text>
</comment>
<comment type="subcellular location">
    <subcellularLocation>
        <location evidence="1">Cytoplasm</location>
    </subcellularLocation>
</comment>
<comment type="similarity">
    <text evidence="1">Belongs to the uroporphyrinogen decarboxylase family.</text>
</comment>